<organism>
    <name type="scientific">Phenylobacterium zucineum (strain HLK1)</name>
    <dbReference type="NCBI Taxonomy" id="450851"/>
    <lineage>
        <taxon>Bacteria</taxon>
        <taxon>Pseudomonadati</taxon>
        <taxon>Pseudomonadota</taxon>
        <taxon>Alphaproteobacteria</taxon>
        <taxon>Caulobacterales</taxon>
        <taxon>Caulobacteraceae</taxon>
        <taxon>Phenylobacterium</taxon>
    </lineage>
</organism>
<evidence type="ECO:0000255" key="1">
    <source>
        <dbReference type="HAMAP-Rule" id="MF_00211"/>
    </source>
</evidence>
<reference key="1">
    <citation type="journal article" date="2008" name="BMC Genomics">
        <title>Complete genome of Phenylobacterium zucineum - a novel facultative intracellular bacterium isolated from human erythroleukemia cell line K562.</title>
        <authorList>
            <person name="Luo Y."/>
            <person name="Xu X."/>
            <person name="Ding Z."/>
            <person name="Liu Z."/>
            <person name="Zhang B."/>
            <person name="Yan Z."/>
            <person name="Sun J."/>
            <person name="Hu S."/>
            <person name="Hu X."/>
        </authorList>
    </citation>
    <scope>NUCLEOTIDE SEQUENCE [LARGE SCALE GENOMIC DNA]</scope>
    <source>
        <strain>HLK1</strain>
    </source>
</reference>
<comment type="function">
    <text evidence="1">Catalyzes the transfer of the phosphoribosyl group of 5-phosphorylribose-1-pyrophosphate (PRPP) to anthranilate to yield N-(5'-phosphoribosyl)-anthranilate (PRA).</text>
</comment>
<comment type="catalytic activity">
    <reaction evidence="1">
        <text>N-(5-phospho-beta-D-ribosyl)anthranilate + diphosphate = 5-phospho-alpha-D-ribose 1-diphosphate + anthranilate</text>
        <dbReference type="Rhea" id="RHEA:11768"/>
        <dbReference type="ChEBI" id="CHEBI:16567"/>
        <dbReference type="ChEBI" id="CHEBI:18277"/>
        <dbReference type="ChEBI" id="CHEBI:33019"/>
        <dbReference type="ChEBI" id="CHEBI:58017"/>
        <dbReference type="EC" id="2.4.2.18"/>
    </reaction>
</comment>
<comment type="cofactor">
    <cofactor evidence="1">
        <name>Mg(2+)</name>
        <dbReference type="ChEBI" id="CHEBI:18420"/>
    </cofactor>
    <text evidence="1">Binds 2 magnesium ions per monomer.</text>
</comment>
<comment type="pathway">
    <text evidence="1">Amino-acid biosynthesis; L-tryptophan biosynthesis; L-tryptophan from chorismate: step 2/5.</text>
</comment>
<comment type="subunit">
    <text evidence="1">Homodimer.</text>
</comment>
<comment type="similarity">
    <text evidence="1">Belongs to the anthranilate phosphoribosyltransferase family.</text>
</comment>
<gene>
    <name evidence="1" type="primary">trpD</name>
    <name type="ordered locus">PHZ_c1760</name>
</gene>
<sequence>MSDAFKPLLSRLADGATLSDDDADAFFSACLRGEPTPAQVGAALTAMRMRGETLGEIAACARAMRRAAIHLEPPFPTIDVCGTGGDGLHTLNISTAVGFVAAGGGLKVAKHGNRAMSSKSGTADVLGELGVNIAAPPEKQLQALDEAGICFLFAPAHHSAMRHVSPIRAELGFRTIFNLLGPLTNPAGAQRQVVGVFAERWVKPLAQALGMLGSEKAWVVHGAGLDELTTTGETSVAEFSDGKVRLFTITPEAVGLRRAALADITGGSPAENAQALRRLLAGETGAYRDIVALNAAAAFLVADKVETLREGVELAGRVLDEGRAQAALERLVEITAP</sequence>
<proteinExistence type="inferred from homology"/>
<keyword id="KW-0028">Amino-acid biosynthesis</keyword>
<keyword id="KW-0057">Aromatic amino acid biosynthesis</keyword>
<keyword id="KW-0328">Glycosyltransferase</keyword>
<keyword id="KW-0460">Magnesium</keyword>
<keyword id="KW-0479">Metal-binding</keyword>
<keyword id="KW-1185">Reference proteome</keyword>
<keyword id="KW-0808">Transferase</keyword>
<keyword id="KW-0822">Tryptophan biosynthesis</keyword>
<protein>
    <recommendedName>
        <fullName evidence="1">Anthranilate phosphoribosyltransferase</fullName>
        <ecNumber evidence="1">2.4.2.18</ecNumber>
    </recommendedName>
</protein>
<accession>B4RBX4</accession>
<feature type="chain" id="PRO_1000099829" description="Anthranilate phosphoribosyltransferase">
    <location>
        <begin position="1"/>
        <end position="337"/>
    </location>
</feature>
<feature type="binding site" evidence="1">
    <location>
        <position position="82"/>
    </location>
    <ligand>
        <name>5-phospho-alpha-D-ribose 1-diphosphate</name>
        <dbReference type="ChEBI" id="CHEBI:58017"/>
    </ligand>
</feature>
<feature type="binding site" evidence="1">
    <location>
        <position position="82"/>
    </location>
    <ligand>
        <name>anthranilate</name>
        <dbReference type="ChEBI" id="CHEBI:16567"/>
        <label>1</label>
    </ligand>
</feature>
<feature type="binding site" evidence="1">
    <location>
        <begin position="85"/>
        <end position="86"/>
    </location>
    <ligand>
        <name>5-phospho-alpha-D-ribose 1-diphosphate</name>
        <dbReference type="ChEBI" id="CHEBI:58017"/>
    </ligand>
</feature>
<feature type="binding site" evidence="1">
    <location>
        <position position="90"/>
    </location>
    <ligand>
        <name>5-phospho-alpha-D-ribose 1-diphosphate</name>
        <dbReference type="ChEBI" id="CHEBI:58017"/>
    </ligand>
</feature>
<feature type="binding site" evidence="1">
    <location>
        <begin position="92"/>
        <end position="95"/>
    </location>
    <ligand>
        <name>5-phospho-alpha-D-ribose 1-diphosphate</name>
        <dbReference type="ChEBI" id="CHEBI:58017"/>
    </ligand>
</feature>
<feature type="binding site" evidence="1">
    <location>
        <position position="94"/>
    </location>
    <ligand>
        <name>Mg(2+)</name>
        <dbReference type="ChEBI" id="CHEBI:18420"/>
        <label>1</label>
    </ligand>
</feature>
<feature type="binding site" evidence="1">
    <location>
        <begin position="110"/>
        <end position="118"/>
    </location>
    <ligand>
        <name>5-phospho-alpha-D-ribose 1-diphosphate</name>
        <dbReference type="ChEBI" id="CHEBI:58017"/>
    </ligand>
</feature>
<feature type="binding site" evidence="1">
    <location>
        <position position="113"/>
    </location>
    <ligand>
        <name>anthranilate</name>
        <dbReference type="ChEBI" id="CHEBI:16567"/>
        <label>1</label>
    </ligand>
</feature>
<feature type="binding site" evidence="1">
    <location>
        <position position="122"/>
    </location>
    <ligand>
        <name>5-phospho-alpha-D-ribose 1-diphosphate</name>
        <dbReference type="ChEBI" id="CHEBI:58017"/>
    </ligand>
</feature>
<feature type="binding site" evidence="1">
    <location>
        <position position="168"/>
    </location>
    <ligand>
        <name>anthranilate</name>
        <dbReference type="ChEBI" id="CHEBI:16567"/>
        <label>2</label>
    </ligand>
</feature>
<feature type="binding site" evidence="1">
    <location>
        <position position="226"/>
    </location>
    <ligand>
        <name>Mg(2+)</name>
        <dbReference type="ChEBI" id="CHEBI:18420"/>
        <label>2</label>
    </ligand>
</feature>
<feature type="binding site" evidence="1">
    <location>
        <position position="227"/>
    </location>
    <ligand>
        <name>Mg(2+)</name>
        <dbReference type="ChEBI" id="CHEBI:18420"/>
        <label>1</label>
    </ligand>
</feature>
<feature type="binding site" evidence="1">
    <location>
        <position position="227"/>
    </location>
    <ligand>
        <name>Mg(2+)</name>
        <dbReference type="ChEBI" id="CHEBI:18420"/>
        <label>2</label>
    </ligand>
</feature>
<dbReference type="EC" id="2.4.2.18" evidence="1"/>
<dbReference type="EMBL" id="CP000747">
    <property type="protein sequence ID" value="ACG78171.1"/>
    <property type="molecule type" value="Genomic_DNA"/>
</dbReference>
<dbReference type="RefSeq" id="WP_012522313.1">
    <property type="nucleotide sequence ID" value="NC_011144.1"/>
</dbReference>
<dbReference type="SMR" id="B4RBX4"/>
<dbReference type="STRING" id="450851.PHZ_c1760"/>
<dbReference type="KEGG" id="pzu:PHZ_c1760"/>
<dbReference type="eggNOG" id="COG0547">
    <property type="taxonomic scope" value="Bacteria"/>
</dbReference>
<dbReference type="HOGENOM" id="CLU_034315_2_1_5"/>
<dbReference type="OrthoDB" id="9806430at2"/>
<dbReference type="UniPathway" id="UPA00035">
    <property type="reaction ID" value="UER00041"/>
</dbReference>
<dbReference type="Proteomes" id="UP000001868">
    <property type="component" value="Chromosome"/>
</dbReference>
<dbReference type="GO" id="GO:0005829">
    <property type="term" value="C:cytosol"/>
    <property type="evidence" value="ECO:0007669"/>
    <property type="project" value="TreeGrafter"/>
</dbReference>
<dbReference type="GO" id="GO:0004048">
    <property type="term" value="F:anthranilate phosphoribosyltransferase activity"/>
    <property type="evidence" value="ECO:0007669"/>
    <property type="project" value="UniProtKB-UniRule"/>
</dbReference>
<dbReference type="GO" id="GO:0000287">
    <property type="term" value="F:magnesium ion binding"/>
    <property type="evidence" value="ECO:0007669"/>
    <property type="project" value="UniProtKB-UniRule"/>
</dbReference>
<dbReference type="GO" id="GO:0000162">
    <property type="term" value="P:L-tryptophan biosynthetic process"/>
    <property type="evidence" value="ECO:0007669"/>
    <property type="project" value="UniProtKB-UniRule"/>
</dbReference>
<dbReference type="FunFam" id="3.40.1030.10:FF:000002">
    <property type="entry name" value="Anthranilate phosphoribosyltransferase"/>
    <property type="match status" value="1"/>
</dbReference>
<dbReference type="Gene3D" id="3.40.1030.10">
    <property type="entry name" value="Nucleoside phosphorylase/phosphoribosyltransferase catalytic domain"/>
    <property type="match status" value="1"/>
</dbReference>
<dbReference type="Gene3D" id="1.20.970.10">
    <property type="entry name" value="Transferase, Pyrimidine Nucleoside Phosphorylase, Chain C"/>
    <property type="match status" value="1"/>
</dbReference>
<dbReference type="HAMAP" id="MF_00211">
    <property type="entry name" value="TrpD"/>
    <property type="match status" value="1"/>
</dbReference>
<dbReference type="InterPro" id="IPR005940">
    <property type="entry name" value="Anthranilate_Pribosyl_Tfrase"/>
</dbReference>
<dbReference type="InterPro" id="IPR000312">
    <property type="entry name" value="Glycosyl_Trfase_fam3"/>
</dbReference>
<dbReference type="InterPro" id="IPR017459">
    <property type="entry name" value="Glycosyl_Trfase_fam3_N_dom"/>
</dbReference>
<dbReference type="InterPro" id="IPR036320">
    <property type="entry name" value="Glycosyl_Trfase_fam3_N_dom_sf"/>
</dbReference>
<dbReference type="InterPro" id="IPR035902">
    <property type="entry name" value="Nuc_phospho_transferase"/>
</dbReference>
<dbReference type="NCBIfam" id="TIGR01245">
    <property type="entry name" value="trpD"/>
    <property type="match status" value="1"/>
</dbReference>
<dbReference type="PANTHER" id="PTHR43285">
    <property type="entry name" value="ANTHRANILATE PHOSPHORIBOSYLTRANSFERASE"/>
    <property type="match status" value="1"/>
</dbReference>
<dbReference type="PANTHER" id="PTHR43285:SF2">
    <property type="entry name" value="ANTHRANILATE PHOSPHORIBOSYLTRANSFERASE"/>
    <property type="match status" value="1"/>
</dbReference>
<dbReference type="Pfam" id="PF02885">
    <property type="entry name" value="Glycos_trans_3N"/>
    <property type="match status" value="1"/>
</dbReference>
<dbReference type="Pfam" id="PF00591">
    <property type="entry name" value="Glycos_transf_3"/>
    <property type="match status" value="1"/>
</dbReference>
<dbReference type="SUPFAM" id="SSF52418">
    <property type="entry name" value="Nucleoside phosphorylase/phosphoribosyltransferase catalytic domain"/>
    <property type="match status" value="1"/>
</dbReference>
<dbReference type="SUPFAM" id="SSF47648">
    <property type="entry name" value="Nucleoside phosphorylase/phosphoribosyltransferase N-terminal domain"/>
    <property type="match status" value="1"/>
</dbReference>
<name>TRPD_PHEZH</name>